<evidence type="ECO:0000255" key="1">
    <source>
        <dbReference type="HAMAP-Rule" id="MF_01220"/>
    </source>
</evidence>
<evidence type="ECO:0000305" key="2"/>
<reference key="1">
    <citation type="journal article" date="2003" name="Nat. Genet.">
        <title>Comparative analysis of the genome sequences of Bordetella pertussis, Bordetella parapertussis and Bordetella bronchiseptica.</title>
        <authorList>
            <person name="Parkhill J."/>
            <person name="Sebaihia M."/>
            <person name="Preston A."/>
            <person name="Murphy L.D."/>
            <person name="Thomson N.R."/>
            <person name="Harris D.E."/>
            <person name="Holden M.T.G."/>
            <person name="Churcher C.M."/>
            <person name="Bentley S.D."/>
            <person name="Mungall K.L."/>
            <person name="Cerdeno-Tarraga A.-M."/>
            <person name="Temple L."/>
            <person name="James K.D."/>
            <person name="Harris B."/>
            <person name="Quail M.A."/>
            <person name="Achtman M."/>
            <person name="Atkin R."/>
            <person name="Baker S."/>
            <person name="Basham D."/>
            <person name="Bason N."/>
            <person name="Cherevach I."/>
            <person name="Chillingworth T."/>
            <person name="Collins M."/>
            <person name="Cronin A."/>
            <person name="Davis P."/>
            <person name="Doggett J."/>
            <person name="Feltwell T."/>
            <person name="Goble A."/>
            <person name="Hamlin N."/>
            <person name="Hauser H."/>
            <person name="Holroyd S."/>
            <person name="Jagels K."/>
            <person name="Leather S."/>
            <person name="Moule S."/>
            <person name="Norberczak H."/>
            <person name="O'Neil S."/>
            <person name="Ormond D."/>
            <person name="Price C."/>
            <person name="Rabbinowitsch E."/>
            <person name="Rutter S."/>
            <person name="Sanders M."/>
            <person name="Saunders D."/>
            <person name="Seeger K."/>
            <person name="Sharp S."/>
            <person name="Simmonds M."/>
            <person name="Skelton J."/>
            <person name="Squares R."/>
            <person name="Squares S."/>
            <person name="Stevens K."/>
            <person name="Unwin L."/>
            <person name="Whitehead S."/>
            <person name="Barrell B.G."/>
            <person name="Maskell D.J."/>
        </authorList>
    </citation>
    <scope>NUCLEOTIDE SEQUENCE [LARGE SCALE GENOMIC DNA]</scope>
    <source>
        <strain>12822 / ATCC BAA-587 / NCTC 13253</strain>
    </source>
</reference>
<name>PYRH_BORPA</name>
<dbReference type="EC" id="2.7.4.22" evidence="1"/>
<dbReference type="EMBL" id="BX640427">
    <property type="protein sequence ID" value="CAE36831.1"/>
    <property type="status" value="ALT_INIT"/>
    <property type="molecule type" value="Genomic_DNA"/>
</dbReference>
<dbReference type="RefSeq" id="WP_010928079.1">
    <property type="nucleotide sequence ID" value="NC_002928.3"/>
</dbReference>
<dbReference type="SMR" id="Q7WA58"/>
<dbReference type="GeneID" id="93203288"/>
<dbReference type="KEGG" id="bpa:BPP1529"/>
<dbReference type="HOGENOM" id="CLU_033861_0_0_4"/>
<dbReference type="UniPathway" id="UPA00159">
    <property type="reaction ID" value="UER00275"/>
</dbReference>
<dbReference type="Proteomes" id="UP000001421">
    <property type="component" value="Chromosome"/>
</dbReference>
<dbReference type="GO" id="GO:0005829">
    <property type="term" value="C:cytosol"/>
    <property type="evidence" value="ECO:0007669"/>
    <property type="project" value="TreeGrafter"/>
</dbReference>
<dbReference type="GO" id="GO:0005524">
    <property type="term" value="F:ATP binding"/>
    <property type="evidence" value="ECO:0007669"/>
    <property type="project" value="UniProtKB-KW"/>
</dbReference>
<dbReference type="GO" id="GO:0033862">
    <property type="term" value="F:UMP kinase activity"/>
    <property type="evidence" value="ECO:0007669"/>
    <property type="project" value="UniProtKB-EC"/>
</dbReference>
<dbReference type="GO" id="GO:0044210">
    <property type="term" value="P:'de novo' CTP biosynthetic process"/>
    <property type="evidence" value="ECO:0007669"/>
    <property type="project" value="UniProtKB-UniRule"/>
</dbReference>
<dbReference type="GO" id="GO:0006225">
    <property type="term" value="P:UDP biosynthetic process"/>
    <property type="evidence" value="ECO:0007669"/>
    <property type="project" value="TreeGrafter"/>
</dbReference>
<dbReference type="CDD" id="cd04254">
    <property type="entry name" value="AAK_UMPK-PyrH-Ec"/>
    <property type="match status" value="1"/>
</dbReference>
<dbReference type="FunFam" id="3.40.1160.10:FF:000001">
    <property type="entry name" value="Uridylate kinase"/>
    <property type="match status" value="1"/>
</dbReference>
<dbReference type="Gene3D" id="3.40.1160.10">
    <property type="entry name" value="Acetylglutamate kinase-like"/>
    <property type="match status" value="1"/>
</dbReference>
<dbReference type="HAMAP" id="MF_01220_B">
    <property type="entry name" value="PyrH_B"/>
    <property type="match status" value="1"/>
</dbReference>
<dbReference type="InterPro" id="IPR036393">
    <property type="entry name" value="AceGlu_kinase-like_sf"/>
</dbReference>
<dbReference type="InterPro" id="IPR001048">
    <property type="entry name" value="Asp/Glu/Uridylate_kinase"/>
</dbReference>
<dbReference type="InterPro" id="IPR011817">
    <property type="entry name" value="Uridylate_kinase"/>
</dbReference>
<dbReference type="InterPro" id="IPR015963">
    <property type="entry name" value="Uridylate_kinase_bac"/>
</dbReference>
<dbReference type="NCBIfam" id="TIGR02075">
    <property type="entry name" value="pyrH_bact"/>
    <property type="match status" value="1"/>
</dbReference>
<dbReference type="PANTHER" id="PTHR42833">
    <property type="entry name" value="URIDYLATE KINASE"/>
    <property type="match status" value="1"/>
</dbReference>
<dbReference type="PANTHER" id="PTHR42833:SF4">
    <property type="entry name" value="URIDYLATE KINASE PUMPKIN, CHLOROPLASTIC"/>
    <property type="match status" value="1"/>
</dbReference>
<dbReference type="Pfam" id="PF00696">
    <property type="entry name" value="AA_kinase"/>
    <property type="match status" value="1"/>
</dbReference>
<dbReference type="PIRSF" id="PIRSF005650">
    <property type="entry name" value="Uridylate_kin"/>
    <property type="match status" value="1"/>
</dbReference>
<dbReference type="SUPFAM" id="SSF53633">
    <property type="entry name" value="Carbamate kinase-like"/>
    <property type="match status" value="1"/>
</dbReference>
<gene>
    <name evidence="1" type="primary">pyrH</name>
    <name type="synonym">smbA</name>
    <name type="ordered locus">BPP1529</name>
</gene>
<organism>
    <name type="scientific">Bordetella parapertussis (strain 12822 / ATCC BAA-587 / NCTC 13253)</name>
    <dbReference type="NCBI Taxonomy" id="257311"/>
    <lineage>
        <taxon>Bacteria</taxon>
        <taxon>Pseudomonadati</taxon>
        <taxon>Pseudomonadota</taxon>
        <taxon>Betaproteobacteria</taxon>
        <taxon>Burkholderiales</taxon>
        <taxon>Alcaligenaceae</taxon>
        <taxon>Bordetella</taxon>
    </lineage>
</organism>
<feature type="chain" id="PRO_0000323799" description="Uridylate kinase">
    <location>
        <begin position="1"/>
        <end position="238"/>
    </location>
</feature>
<feature type="binding site" evidence="1">
    <location>
        <begin position="12"/>
        <end position="15"/>
    </location>
    <ligand>
        <name>ATP</name>
        <dbReference type="ChEBI" id="CHEBI:30616"/>
    </ligand>
</feature>
<feature type="binding site" evidence="1">
    <location>
        <position position="54"/>
    </location>
    <ligand>
        <name>UMP</name>
        <dbReference type="ChEBI" id="CHEBI:57865"/>
    </ligand>
</feature>
<feature type="binding site" evidence="1">
    <location>
        <position position="55"/>
    </location>
    <ligand>
        <name>ATP</name>
        <dbReference type="ChEBI" id="CHEBI:30616"/>
    </ligand>
</feature>
<feature type="binding site" evidence="1">
    <location>
        <position position="59"/>
    </location>
    <ligand>
        <name>ATP</name>
        <dbReference type="ChEBI" id="CHEBI:30616"/>
    </ligand>
</feature>
<feature type="binding site" evidence="1">
    <location>
        <position position="74"/>
    </location>
    <ligand>
        <name>UMP</name>
        <dbReference type="ChEBI" id="CHEBI:57865"/>
    </ligand>
</feature>
<feature type="binding site" evidence="1">
    <location>
        <begin position="135"/>
        <end position="142"/>
    </location>
    <ligand>
        <name>UMP</name>
        <dbReference type="ChEBI" id="CHEBI:57865"/>
    </ligand>
</feature>
<feature type="binding site" evidence="1">
    <location>
        <position position="162"/>
    </location>
    <ligand>
        <name>ATP</name>
        <dbReference type="ChEBI" id="CHEBI:30616"/>
    </ligand>
</feature>
<feature type="binding site" evidence="1">
    <location>
        <position position="168"/>
    </location>
    <ligand>
        <name>ATP</name>
        <dbReference type="ChEBI" id="CHEBI:30616"/>
    </ligand>
</feature>
<feature type="binding site" evidence="1">
    <location>
        <position position="171"/>
    </location>
    <ligand>
        <name>ATP</name>
        <dbReference type="ChEBI" id="CHEBI:30616"/>
    </ligand>
</feature>
<keyword id="KW-0067">ATP-binding</keyword>
<keyword id="KW-0963">Cytoplasm</keyword>
<keyword id="KW-0418">Kinase</keyword>
<keyword id="KW-0547">Nucleotide-binding</keyword>
<keyword id="KW-0665">Pyrimidine biosynthesis</keyword>
<keyword id="KW-0808">Transferase</keyword>
<proteinExistence type="inferred from homology"/>
<protein>
    <recommendedName>
        <fullName evidence="1">Uridylate kinase</fullName>
        <shortName evidence="1">UK</shortName>
        <ecNumber evidence="1">2.7.4.22</ecNumber>
    </recommendedName>
    <alternativeName>
        <fullName evidence="1">Uridine monophosphate kinase</fullName>
        <shortName evidence="1">UMP kinase</shortName>
        <shortName evidence="1">UMPK</shortName>
    </alternativeName>
</protein>
<accession>Q7WA58</accession>
<comment type="function">
    <text evidence="1">Catalyzes the reversible phosphorylation of UMP to UDP.</text>
</comment>
<comment type="catalytic activity">
    <reaction evidence="1">
        <text>UMP + ATP = UDP + ADP</text>
        <dbReference type="Rhea" id="RHEA:24400"/>
        <dbReference type="ChEBI" id="CHEBI:30616"/>
        <dbReference type="ChEBI" id="CHEBI:57865"/>
        <dbReference type="ChEBI" id="CHEBI:58223"/>
        <dbReference type="ChEBI" id="CHEBI:456216"/>
        <dbReference type="EC" id="2.7.4.22"/>
    </reaction>
</comment>
<comment type="activity regulation">
    <text evidence="1">Inhibited by UTP.</text>
</comment>
<comment type="pathway">
    <text evidence="1">Pyrimidine metabolism; CTP biosynthesis via de novo pathway; UDP from UMP (UMPK route): step 1/1.</text>
</comment>
<comment type="subunit">
    <text evidence="1">Homohexamer.</text>
</comment>
<comment type="subcellular location">
    <subcellularLocation>
        <location evidence="1">Cytoplasm</location>
    </subcellularLocation>
</comment>
<comment type="similarity">
    <text evidence="1">Belongs to the UMP kinase family.</text>
</comment>
<comment type="sequence caution" evidence="2">
    <conflict type="erroneous initiation">
        <sequence resource="EMBL-CDS" id="CAE36831"/>
    </conflict>
</comment>
<sequence length="238" mass="25585">MSSRSYKRVLLKLSGEALMGEDAFGINRSTIVRMTDEIAEVAALGVELAIVIGGGNIFRGVAPGAQGMDRATADYMGMMATIMNALALQDALKHKGVDTRVQSALNIDQVVEPYIRPKALRYLEEGKVVIFAAGTGNPFFTTDTAAALRGAEIGAEIVLKATKVDGIYSADPNKDPTATRYARISFDEAIVRRLEVMDATAFALCRDQKLPIKVFSINKFGALKRAVSGEDEGTLVHV</sequence>